<accession>Q9IKD1</accession>
<reference key="1">
    <citation type="journal article" date="2000" name="Clin. Diagn. Lab. Immunol.">
        <title>Primary structure of the sialodacryoadenitis virus genome: sequence of the structural-protein region and its application for differential diagnosis.</title>
        <authorList>
            <person name="Yoo D."/>
            <person name="Pei Y."/>
            <person name="Christie N."/>
            <person name="Cooper M."/>
        </authorList>
    </citation>
    <scope>NUCLEOTIDE SEQUENCE [GENOMIC RNA]</scope>
</reference>
<evidence type="ECO:0000250" key="1"/>
<evidence type="ECO:0000255" key="2">
    <source>
        <dbReference type="HAMAP-Rule" id="MF_04099"/>
    </source>
</evidence>
<evidence type="ECO:0000255" key="3">
    <source>
        <dbReference type="PROSITE-ProRule" id="PRU01269"/>
    </source>
</evidence>
<evidence type="ECO:0000255" key="4">
    <source>
        <dbReference type="PROSITE-ProRule" id="PRU01270"/>
    </source>
</evidence>
<gene>
    <name evidence="2" type="primary">S</name>
</gene>
<name>SPIKE_CVRSD</name>
<feature type="signal peptide" evidence="2">
    <location>
        <begin position="1"/>
        <end position="13"/>
    </location>
</feature>
<feature type="chain" id="PRO_0000283922" description="Spike glycoprotein">
    <location>
        <begin position="14"/>
        <end position="1360"/>
    </location>
</feature>
<feature type="chain" id="PRO_0000283923" description="Spike protein S1" evidence="1">
    <location>
        <begin position="14"/>
        <end position="756"/>
    </location>
</feature>
<feature type="chain" id="PRO_0000283924" description="Spike protein S2" evidence="1">
    <location>
        <begin position="757"/>
        <end position="1360"/>
    </location>
</feature>
<feature type="chain" id="PRO_0000444089" description="Spike protein S2'" evidence="2">
    <location>
        <begin position="906"/>
        <end position="1360"/>
    </location>
</feature>
<feature type="topological domain" description="Extracellular" evidence="2">
    <location>
        <begin position="14"/>
        <end position="1301"/>
    </location>
</feature>
<feature type="transmembrane region" description="Helical" evidence="2">
    <location>
        <begin position="1302"/>
        <end position="1322"/>
    </location>
</feature>
<feature type="topological domain" description="Cytoplasmic" evidence="2">
    <location>
        <begin position="1323"/>
        <end position="1360"/>
    </location>
</feature>
<feature type="domain" description="BetaCoV S1-NTD" evidence="4">
    <location>
        <begin position="15"/>
        <end position="296"/>
    </location>
</feature>
<feature type="domain" description="BetaCoV S1-CTD" evidence="3">
    <location>
        <begin position="327"/>
        <end position="605"/>
    </location>
</feature>
<feature type="region of interest" description="Fusion peptide 1" evidence="2">
    <location>
        <begin position="906"/>
        <end position="927"/>
    </location>
</feature>
<feature type="region of interest" description="Fusion peptide 2" evidence="2">
    <location>
        <begin position="925"/>
        <end position="945"/>
    </location>
</feature>
<feature type="region of interest" description="Heptad repeat 1" evidence="2">
    <location>
        <begin position="1006"/>
        <end position="1056"/>
    </location>
</feature>
<feature type="region of interest" description="Heptad repeat 2" evidence="2">
    <location>
        <begin position="1250"/>
        <end position="1290"/>
    </location>
</feature>
<feature type="coiled-coil region" evidence="2">
    <location>
        <begin position="1035"/>
        <end position="1079"/>
    </location>
</feature>
<feature type="coiled-coil region" evidence="2">
    <location>
        <begin position="1263"/>
        <end position="1291"/>
    </location>
</feature>
<feature type="short sequence motif" description="KxHxx" evidence="2">
    <location>
        <begin position="1356"/>
        <end position="1360"/>
    </location>
</feature>
<feature type="site" description="Cleavage; by host" evidence="1">
    <location>
        <begin position="756"/>
        <end position="757"/>
    </location>
</feature>
<feature type="site" description="Cleavage" evidence="2">
    <location>
        <begin position="905"/>
        <end position="906"/>
    </location>
</feature>
<feature type="glycosylation site" description="N-linked (GlcNAc...) asparagine; by host" evidence="2">
    <location>
        <position position="60"/>
    </location>
</feature>
<feature type="glycosylation site" description="N-linked (GlcNAc...) asparagine; by host" evidence="2">
    <location>
        <position position="134"/>
    </location>
</feature>
<feature type="glycosylation site" description="N-linked (GlcNAc...) asparagine; by host" evidence="2">
    <location>
        <position position="192"/>
    </location>
</feature>
<feature type="glycosylation site" description="N-linked (GlcNAc...) asparagine; by host" evidence="2">
    <location>
        <position position="357"/>
    </location>
</feature>
<feature type="glycosylation site" description="N-linked (GlcNAc...) asparagine; by host" evidence="2">
    <location>
        <position position="435"/>
    </location>
</feature>
<feature type="glycosylation site" description="N-linked (GlcNAc...) asparagine; by host" evidence="2">
    <location>
        <position position="566"/>
    </location>
</feature>
<feature type="glycosylation site" description="N-linked (GlcNAc...) asparagine; by host" evidence="2">
    <location>
        <position position="664"/>
    </location>
</feature>
<feature type="glycosylation site" description="N-linked (GlcNAc...) asparagine; by host" evidence="2">
    <location>
        <position position="704"/>
    </location>
</feature>
<feature type="glycosylation site" description="N-linked (GlcNAc...) asparagine; by host" evidence="2">
    <location>
        <position position="727"/>
    </location>
</feature>
<feature type="glycosylation site" description="N-linked (GlcNAc...) asparagine; by host" evidence="2">
    <location>
        <position position="747"/>
    </location>
</feature>
<feature type="glycosylation site" description="N-linked (GlcNAc...) asparagine; by host" evidence="2">
    <location>
        <position position="776"/>
    </location>
</feature>
<feature type="glycosylation site" description="N-linked (GlcNAc...) asparagine; by host" evidence="2">
    <location>
        <position position="793"/>
    </location>
</feature>
<feature type="glycosylation site" description="N-linked (GlcNAc...) asparagine; by host" evidence="2">
    <location>
        <position position="929"/>
    </location>
</feature>
<feature type="glycosylation site" description="N-linked (GlcNAc...) asparagine; by host" evidence="2">
    <location>
        <position position="1216"/>
    </location>
</feature>
<feature type="glycosylation site" description="N-linked (GlcNAc...) asparagine; by host" evidence="2">
    <location>
        <position position="1226"/>
    </location>
</feature>
<feature type="glycosylation site" description="N-linked (GlcNAc...) asparagine; by host" evidence="2">
    <location>
        <position position="1245"/>
    </location>
</feature>
<feature type="glycosylation site" description="N-linked (GlcNAc...) asparagine; by host" evidence="2">
    <location>
        <position position="1261"/>
    </location>
</feature>
<feature type="glycosylation site" description="N-linked (GlcNAc...) asparagine; by host" evidence="2">
    <location>
        <position position="1282"/>
    </location>
</feature>
<feature type="disulfide bond" evidence="4">
    <location>
        <begin position="21"/>
        <end position="158"/>
    </location>
</feature>
<feature type="disulfide bond" evidence="4">
    <location>
        <begin position="153"/>
        <end position="187"/>
    </location>
</feature>
<feature type="disulfide bond" evidence="4">
    <location>
        <begin position="165"/>
        <end position="246"/>
    </location>
</feature>
<feature type="disulfide bond" evidence="4">
    <location>
        <begin position="284"/>
        <end position="294"/>
    </location>
</feature>
<feature type="disulfide bond" evidence="3">
    <location>
        <begin position="329"/>
        <end position="354"/>
    </location>
</feature>
<feature type="disulfide bond" evidence="3">
    <location>
        <begin position="372"/>
        <end position="425"/>
    </location>
</feature>
<feature type="disulfide bond" evidence="3">
    <location>
        <begin position="384"/>
        <end position="603"/>
    </location>
</feature>
<feature type="disulfide bond" evidence="2">
    <location>
        <begin position="930"/>
        <end position="941"/>
    </location>
</feature>
<protein>
    <recommendedName>
        <fullName evidence="2">Spike glycoprotein</fullName>
        <shortName evidence="2">S glycoprotein</shortName>
    </recommendedName>
    <alternativeName>
        <fullName evidence="2">E2</fullName>
    </alternativeName>
    <alternativeName>
        <fullName evidence="2">Peplomer protein</fullName>
    </alternativeName>
    <component>
        <recommendedName>
            <fullName evidence="2">Spike protein S1</fullName>
        </recommendedName>
    </component>
    <component>
        <recommendedName>
            <fullName evidence="2">Spike protein S2</fullName>
        </recommendedName>
    </component>
    <component>
        <recommendedName>
            <fullName evidence="2">Spike protein S2'</fullName>
        </recommendedName>
    </component>
</protein>
<comment type="function">
    <molecule>Spike protein S1</molecule>
    <text evidence="2">Attaches the virion to the cell membrane by interacting with host receptor, initiating the infection.</text>
</comment>
<comment type="function">
    <molecule>Spike protein S2</molecule>
    <text evidence="2">Mediates fusion of the virion and cellular membranes by acting as a class I viral fusion protein. Under the current model, the protein has at least three conformational states: pre-fusion native state, pre-hairpin intermediate state, and post-fusion hairpin state. During viral and target cell membrane fusion, the coiled coil regions (heptad repeats) assume a trimer-of-hairpins structure, positioning the fusion peptide in close proximity to the C-terminal region of the ectodomain. The formation of this structure appears to drive apposition and subsequent fusion of viral and target cell membranes.</text>
</comment>
<comment type="function">
    <molecule>Spike protein S2'</molecule>
    <text evidence="2">Acts as a viral fusion peptide which is unmasked following S2 cleavage occurring upon virus endocytosis.</text>
</comment>
<comment type="subunit">
    <text evidence="2">Homotrimer; each monomer consists of a S1 and a S2 subunit. The resulting peplomers protrude from the virus surface as spikes.</text>
</comment>
<comment type="subcellular location">
    <subcellularLocation>
        <location evidence="2">Virion membrane</location>
        <topology evidence="2">Single-pass type I membrane protein</topology>
    </subcellularLocation>
    <subcellularLocation>
        <location evidence="2">Host endoplasmic reticulum-Golgi intermediate compartment membrane</location>
        <topology evidence="2">Single-pass type I membrane protein</topology>
    </subcellularLocation>
    <subcellularLocation>
        <location evidence="2">Host cell membrane</location>
        <topology evidence="2">Single-pass type I membrane protein</topology>
    </subcellularLocation>
    <text evidence="2">Accumulates in the endoplasmic reticulum-Golgi intermediate compartment, where it participates in virus particle assembly. Some S oligomers are transported to the host plasma membrane, where they may mediate cell-cell fusion.</text>
</comment>
<comment type="domain">
    <text evidence="2">Fusion peptide 1 (FP1) and fusion peptide 2 (FP2) function cooperatively and have a membrane-ordering effect on lipid headgroups and shallow hydrophobic regions of target bilayers. They are considered as two domains of an extended, bipartite FP. The membrane-ordering activity is calcium-dependent and also dependent on correct folding, which is maintained by an internal disulfide bond in FP2.</text>
</comment>
<comment type="PTM">
    <text evidence="2">Specific enzymatic cleavages in vivo yield mature proteins. The precursor is processed into S1 and S2 by host cell furin or another cellular protease to yield the mature S1 and S2 proteins. Additionally, a second cleavage leads to the release of a fusion peptide after viral attachment to host cell receptor.</text>
</comment>
<comment type="PTM">
    <text evidence="2">The cytoplasmic Cys-rich domain is palmitoylated. Spike glycoprotein is digested within host endosomes.</text>
</comment>
<comment type="similarity">
    <text evidence="2">Belongs to the betacoronaviruses spike protein family.</text>
</comment>
<organism>
    <name type="scientific">Rat coronavirus (strain 681)</name>
    <name type="common">RCV-SDAV</name>
    <name type="synonym">Sialodacryoadenitis virus SDAV-681</name>
    <dbReference type="NCBI Taxonomy" id="33740"/>
    <lineage>
        <taxon>Viruses</taxon>
        <taxon>Riboviria</taxon>
        <taxon>Orthornavirae</taxon>
        <taxon>Pisuviricota</taxon>
        <taxon>Pisoniviricetes</taxon>
        <taxon>Nidovirales</taxon>
        <taxon>Cornidovirineae</taxon>
        <taxon>Coronaviridae</taxon>
        <taxon>Orthocoronavirinae</taxon>
        <taxon>Betacoronavirus</taxon>
        <taxon>Embecovirus</taxon>
        <taxon>Murine coronavirus</taxon>
    </lineage>
</organism>
<sequence length="1360" mass="149547">MLFVFLTLLPSCLGYIGDFRCINLVNTRISNARAPSVSTEVVDVSKGLGTYYVLDRVYLNATLLLTGYYPVDGSMYRNMALMGTNTLSLNWFEPPFLSEFNDGIYAKVKNLKASLPIGSASYFPTIIIGSNFVNTSYTVVLEPYNGIIMASICQYTICQLPHTDCKPNTGGNTLIGFWHTDLRPPVCILKRNFTFNVNAEWLYFHFYQQGGTFYAYYADVSSATTFLFSSYIGAVLTQYFVLPYMCSPTTSGVSSPQYWVTPLVKRQYLFNFNQKGIITSAVDCASSYTSEIKCKTQSMNPNTGVYDLSGYTVQPVGLVYRRVRNLPDCKIEEWLAANTVPSPLNWERKTFQNCNFNLSSLLRFVQAESLSCSNIDASKVYGMCFGSISIDKFAIPNSRRVDLQLGKSGLLQSFNYKIDTRATSCQLYYSLAQDNVTVINHNPSSWNRRYGFNDVATFHSGEHDVAYAEACFTVGASYCPCAKPSTVYSCVTGKPKSANCPTGTSNRECNVQASGFKSKCDCTCNPSPLTTYDPRCLQARSMLGVGDHCEGLGILEDKCGGSNICNCSADAFVGWAMDSCLSNARCHIFSNLMLNGINSGTTCSTDFQLPNTEVVTGVCVKYDLYGSTGQGVFKEVKADYYNSWQNLLYDVNGNLNGFRDIVTNKTYLLRSCYSGRVSAAYHQDAPEPALLYRNLKCDYVFNNNISREETPLNYFDSYLGCVINADNSTEQSVDACDLRMGSGLCVNYSIAHRARRSVSTGYKLTTFEPFTVSIVNDSVESVGGLYEMQIPTNFTIASHQEFIQTRSPKVTIDCAAFVCGDYTACRQQLVDYGSFCDNINAILGEVNNLIDTMQLQVASALIQGVTLSSRLADGISGQIDDINFSPLLGCLGSDCSEGTKAAQGRSAIEDVLFDKVKLSDVGFVESYNNCTGGQEVRDLLCVQSFNGIKVLPPVLSESQISGYTAGATASAMFPPWSAAAGVPFALSVQYRINGLGVTMNVLSENQKMIASSFNNAIGAIQEGFDATNSALAKIQSVVNANAEALNNLLNQLSNRFGAISASLQEILSRLDALEAQAQIDRLINGRLTALNAYVSKQLSDMTLIKVSAAQAIEKVNECVKSQSPRINFCGNGNHILSLVQNAPYGLYFIHFSYVPTSFTTVNVSPGLCISGDRGLAPKAGYFVQDHGEWKFTGSNYYYPESITDKNSVVMSSCAVNYTKAPEVFLNTSITNLPDFKEELDKWFKNQTSIVPDLSFDIGKLNVTFLDLSYEMNRIQDAIKNLNESYINLKEIGTYEMYVKWPWYVWLLIGLAGVAVCVLLFFICCCTGCGSCCFKKCGNCCDEYGGRQAGIVIHNISSHED</sequence>
<organismHost>
    <name type="scientific">Rattus norvegicus</name>
    <name type="common">Rat</name>
    <dbReference type="NCBI Taxonomy" id="10116"/>
</organismHost>
<proteinExistence type="inferred from homology"/>
<dbReference type="EMBL" id="AF207551">
    <property type="protein sequence ID" value="AAF97738.1"/>
    <property type="molecule type" value="Genomic_RNA"/>
</dbReference>
<dbReference type="SMR" id="Q9IKD1"/>
<dbReference type="GlyCosmos" id="Q9IKD1">
    <property type="glycosylation" value="18 sites, No reported glycans"/>
</dbReference>
<dbReference type="GO" id="GO:0044173">
    <property type="term" value="C:host cell endoplasmic reticulum-Golgi intermediate compartment membrane"/>
    <property type="evidence" value="ECO:0007669"/>
    <property type="project" value="UniProtKB-SubCell"/>
</dbReference>
<dbReference type="GO" id="GO:0020002">
    <property type="term" value="C:host cell plasma membrane"/>
    <property type="evidence" value="ECO:0007669"/>
    <property type="project" value="UniProtKB-SubCell"/>
</dbReference>
<dbReference type="GO" id="GO:0016020">
    <property type="term" value="C:membrane"/>
    <property type="evidence" value="ECO:0007669"/>
    <property type="project" value="UniProtKB-UniRule"/>
</dbReference>
<dbReference type="GO" id="GO:0019031">
    <property type="term" value="C:viral envelope"/>
    <property type="evidence" value="ECO:0007669"/>
    <property type="project" value="UniProtKB-UniRule"/>
</dbReference>
<dbReference type="GO" id="GO:0055036">
    <property type="term" value="C:virion membrane"/>
    <property type="evidence" value="ECO:0007669"/>
    <property type="project" value="UniProtKB-SubCell"/>
</dbReference>
<dbReference type="GO" id="GO:0075509">
    <property type="term" value="P:endocytosis involved in viral entry into host cell"/>
    <property type="evidence" value="ECO:0007669"/>
    <property type="project" value="UniProtKB-UniRule"/>
</dbReference>
<dbReference type="GO" id="GO:0039654">
    <property type="term" value="P:fusion of virus membrane with host endosome membrane"/>
    <property type="evidence" value="ECO:0007669"/>
    <property type="project" value="UniProtKB-UniRule"/>
</dbReference>
<dbReference type="GO" id="GO:0019064">
    <property type="term" value="P:fusion of virus membrane with host plasma membrane"/>
    <property type="evidence" value="ECO:0007669"/>
    <property type="project" value="UniProtKB-UniRule"/>
</dbReference>
<dbReference type="GO" id="GO:0046813">
    <property type="term" value="P:receptor-mediated virion attachment to host cell"/>
    <property type="evidence" value="ECO:0007669"/>
    <property type="project" value="UniProtKB-UniRule"/>
</dbReference>
<dbReference type="CDD" id="cd22380">
    <property type="entry name" value="HKU1-CoV-like_Spike_SD1-2_S1-S2_S2"/>
    <property type="match status" value="1"/>
</dbReference>
<dbReference type="CDD" id="cd21625">
    <property type="entry name" value="MHV-like_Spike_S1_NTD"/>
    <property type="match status" value="1"/>
</dbReference>
<dbReference type="CDD" id="cd21484">
    <property type="entry name" value="MHV-like_Spike_S1_RBD"/>
    <property type="match status" value="1"/>
</dbReference>
<dbReference type="FunFam" id="1.20.5.300:FF:000003">
    <property type="entry name" value="Spike glycoprotein"/>
    <property type="match status" value="1"/>
</dbReference>
<dbReference type="FunFam" id="1.20.5.300:FF:000006">
    <property type="entry name" value="Spike glycoprotein"/>
    <property type="match status" value="1"/>
</dbReference>
<dbReference type="FunFam" id="2.60.120.960:FF:000002">
    <property type="entry name" value="Spike glycoprotein"/>
    <property type="match status" value="1"/>
</dbReference>
<dbReference type="Gene3D" id="1.20.5.300">
    <property type="match status" value="2"/>
</dbReference>
<dbReference type="Gene3D" id="3.30.70.1840">
    <property type="match status" value="1"/>
</dbReference>
<dbReference type="Gene3D" id="2.60.120.960">
    <property type="entry name" value="Spike glycoprotein, N-terminal domain"/>
    <property type="match status" value="1"/>
</dbReference>
<dbReference type="HAMAP" id="MF_04099">
    <property type="entry name" value="BETA_CORONA_SPIKE"/>
    <property type="match status" value="1"/>
</dbReference>
<dbReference type="InterPro" id="IPR032500">
    <property type="entry name" value="bCoV_S1_N"/>
</dbReference>
<dbReference type="InterPro" id="IPR042578">
    <property type="entry name" value="BETA_CORONA_SPIKE"/>
</dbReference>
<dbReference type="InterPro" id="IPR043607">
    <property type="entry name" value="CoV_S1_C"/>
</dbReference>
<dbReference type="InterPro" id="IPR043473">
    <property type="entry name" value="S2_sf_CoV"/>
</dbReference>
<dbReference type="InterPro" id="IPR043002">
    <property type="entry name" value="Spike_N_sf"/>
</dbReference>
<dbReference type="InterPro" id="IPR044339">
    <property type="entry name" value="Spike_S1_NTD_MHV-like"/>
</dbReference>
<dbReference type="InterPro" id="IPR018548">
    <property type="entry name" value="Spike_S1_RBD_bCoV"/>
</dbReference>
<dbReference type="InterPro" id="IPR036326">
    <property type="entry name" value="Spike_S1_RBD_sf_bCoV"/>
</dbReference>
<dbReference type="InterPro" id="IPR002552">
    <property type="entry name" value="Spike_S2_CoV"/>
</dbReference>
<dbReference type="InterPro" id="IPR043614">
    <property type="entry name" value="Spike_S2_CoV_C"/>
</dbReference>
<dbReference type="InterPro" id="IPR044873">
    <property type="entry name" value="Spike_S2_CoV_HR1"/>
</dbReference>
<dbReference type="InterPro" id="IPR044874">
    <property type="entry name" value="Spike_S2_CoV_HR2"/>
</dbReference>
<dbReference type="Pfam" id="PF16451">
    <property type="entry name" value="bCoV_S1_N"/>
    <property type="match status" value="1"/>
</dbReference>
<dbReference type="Pfam" id="PF09408">
    <property type="entry name" value="bCoV_S1_RBD"/>
    <property type="match status" value="1"/>
</dbReference>
<dbReference type="Pfam" id="PF19209">
    <property type="entry name" value="CoV_S1_C"/>
    <property type="match status" value="1"/>
</dbReference>
<dbReference type="Pfam" id="PF01601">
    <property type="entry name" value="CoV_S2"/>
    <property type="match status" value="1"/>
</dbReference>
<dbReference type="Pfam" id="PF19214">
    <property type="entry name" value="CoV_S2_C"/>
    <property type="match status" value="1"/>
</dbReference>
<dbReference type="SUPFAM" id="SSF111474">
    <property type="entry name" value="Coronavirus S2 glycoprotein"/>
    <property type="match status" value="2"/>
</dbReference>
<dbReference type="SUPFAM" id="SSF143587">
    <property type="entry name" value="SARS receptor-binding domain-like"/>
    <property type="match status" value="1"/>
</dbReference>
<dbReference type="PROSITE" id="PS51921">
    <property type="entry name" value="BCOV_S1_CTD"/>
    <property type="match status" value="1"/>
</dbReference>
<dbReference type="PROSITE" id="PS51922">
    <property type="entry name" value="BCOV_S1_NTD"/>
    <property type="match status" value="1"/>
</dbReference>
<dbReference type="PROSITE" id="PS51923">
    <property type="entry name" value="COV_S2_HR1"/>
    <property type="match status" value="1"/>
</dbReference>
<dbReference type="PROSITE" id="PS51924">
    <property type="entry name" value="COV_S2_HR2"/>
    <property type="match status" value="1"/>
</dbReference>
<keyword id="KW-0175">Coiled coil</keyword>
<keyword id="KW-1015">Disulfide bond</keyword>
<keyword id="KW-1170">Fusion of virus membrane with host endosomal membrane</keyword>
<keyword id="KW-1168">Fusion of virus membrane with host membrane</keyword>
<keyword id="KW-0325">Glycoprotein</keyword>
<keyword id="KW-1032">Host cell membrane</keyword>
<keyword id="KW-1043">Host membrane</keyword>
<keyword id="KW-0945">Host-virus interaction</keyword>
<keyword id="KW-0449">Lipoprotein</keyword>
<keyword id="KW-0472">Membrane</keyword>
<keyword id="KW-0564">Palmitate</keyword>
<keyword id="KW-0732">Signal</keyword>
<keyword id="KW-0812">Transmembrane</keyword>
<keyword id="KW-1133">Transmembrane helix</keyword>
<keyword id="KW-1161">Viral attachment to host cell</keyword>
<keyword id="KW-0261">Viral envelope protein</keyword>
<keyword id="KW-1162">Viral penetration into host cytoplasm</keyword>
<keyword id="KW-0946">Virion</keyword>
<keyword id="KW-0843">Virulence</keyword>
<keyword id="KW-1160">Virus entry into host cell</keyword>